<protein>
    <recommendedName>
        <fullName>Basic phospholipase A2 PA-11</fullName>
        <shortName>svPLA2</shortName>
        <ecNumber>3.1.1.4</ecNumber>
    </recommendedName>
    <alternativeName>
        <fullName>Phosphatidylcholine 2-acylhydrolase</fullName>
    </alternativeName>
</protein>
<reference key="1">
    <citation type="journal article" date="1985" name="Toxicon">
        <title>Amino acid sequences of phospholipases A2 from the venom of an Australian elapid snake (king brown snake, Pseudechis australis).</title>
        <authorList>
            <person name="Nishida S."/>
            <person name="Terashima M."/>
            <person name="Tamiya N."/>
        </authorList>
    </citation>
    <scope>PROTEIN SEQUENCE</scope>
    <scope>SUBCELLULAR LOCATION</scope>
    <source>
        <tissue>Venom</tissue>
    </source>
</reference>
<sequence>NLIQFGNMIQCANKGSRPSLDYADYGCYCGWGGSGTPVDELDRCCQVHDNCYEQAGKKGCFPKLTLYSWKCTGNVPTCNSKPGCKSFVCACDAAAAKCFAKAPYKKENYNIDTKKRCK</sequence>
<evidence type="ECO:0000250" key="1"/>
<evidence type="ECO:0000255" key="2">
    <source>
        <dbReference type="PROSITE-ProRule" id="PRU10035"/>
    </source>
</evidence>
<evidence type="ECO:0000255" key="3">
    <source>
        <dbReference type="PROSITE-ProRule" id="PRU10036"/>
    </source>
</evidence>
<evidence type="ECO:0000269" key="4">
    <source>
    </source>
</evidence>
<evidence type="ECO:0000305" key="5"/>
<evidence type="ECO:0000305" key="6">
    <source>
    </source>
</evidence>
<evidence type="ECO:0007744" key="7">
    <source>
        <dbReference type="PDB" id="3V9M"/>
    </source>
</evidence>
<evidence type="ECO:0007829" key="8">
    <source>
        <dbReference type="PDB" id="3V9M"/>
    </source>
</evidence>
<comment type="function">
    <text>PLA2 catalyzes the calcium-dependent hydrolysis of the 2-acyl groups in 3-sn-phosphoglycerides.</text>
</comment>
<comment type="catalytic activity">
    <reaction evidence="2 3">
        <text>a 1,2-diacyl-sn-glycero-3-phosphocholine + H2O = a 1-acyl-sn-glycero-3-phosphocholine + a fatty acid + H(+)</text>
        <dbReference type="Rhea" id="RHEA:15801"/>
        <dbReference type="ChEBI" id="CHEBI:15377"/>
        <dbReference type="ChEBI" id="CHEBI:15378"/>
        <dbReference type="ChEBI" id="CHEBI:28868"/>
        <dbReference type="ChEBI" id="CHEBI:57643"/>
        <dbReference type="ChEBI" id="CHEBI:58168"/>
        <dbReference type="EC" id="3.1.1.4"/>
    </reaction>
</comment>
<comment type="cofactor">
    <cofactor evidence="1">
        <name>Ca(2+)</name>
        <dbReference type="ChEBI" id="CHEBI:29108"/>
    </cofactor>
    <text evidence="1">Binds 1 Ca(2+) ion.</text>
</comment>
<comment type="subcellular location">
    <subcellularLocation>
        <location evidence="4">Secreted</location>
    </subcellularLocation>
</comment>
<comment type="tissue specificity">
    <text evidence="6">Expressed by the venom gland.</text>
</comment>
<comment type="toxic dose">
    <text>LD(50) is 0.24 mg/kg by intravenous injection.</text>
</comment>
<comment type="similarity">
    <text evidence="5">Belongs to the phospholipase A2 family. Group I subfamily. D49 sub-subfamily.</text>
</comment>
<name>PA2BB_PSEAU</name>
<feature type="chain" id="PRO_0000161686" description="Basic phospholipase A2 PA-11">
    <location>
        <begin position="1"/>
        <end position="118"/>
    </location>
</feature>
<feature type="active site" evidence="1">
    <location>
        <position position="48"/>
    </location>
</feature>
<feature type="active site" evidence="1">
    <location>
        <position position="92"/>
    </location>
</feature>
<feature type="binding site" evidence="7">
    <location>
        <position position="28"/>
    </location>
    <ligand>
        <name>Ca(2+)</name>
        <dbReference type="ChEBI" id="CHEBI:29108"/>
    </ligand>
</feature>
<feature type="binding site" evidence="7">
    <location>
        <position position="30"/>
    </location>
    <ligand>
        <name>Ca(2+)</name>
        <dbReference type="ChEBI" id="CHEBI:29108"/>
    </ligand>
</feature>
<feature type="binding site" evidence="7">
    <location>
        <position position="32"/>
    </location>
    <ligand>
        <name>Ca(2+)</name>
        <dbReference type="ChEBI" id="CHEBI:29108"/>
    </ligand>
</feature>
<feature type="binding site" evidence="7">
    <location>
        <position position="49"/>
    </location>
    <ligand>
        <name>Ca(2+)</name>
        <dbReference type="ChEBI" id="CHEBI:29108"/>
    </ligand>
</feature>
<feature type="disulfide bond" evidence="7">
    <location>
        <begin position="11"/>
        <end position="71"/>
    </location>
</feature>
<feature type="disulfide bond" evidence="7">
    <location>
        <begin position="27"/>
        <end position="117"/>
    </location>
</feature>
<feature type="disulfide bond" evidence="7">
    <location>
        <begin position="29"/>
        <end position="45"/>
    </location>
</feature>
<feature type="disulfide bond" evidence="7">
    <location>
        <begin position="44"/>
        <end position="98"/>
    </location>
</feature>
<feature type="disulfide bond" evidence="7">
    <location>
        <begin position="51"/>
        <end position="91"/>
    </location>
</feature>
<feature type="disulfide bond" evidence="7">
    <location>
        <begin position="60"/>
        <end position="84"/>
    </location>
</feature>
<feature type="disulfide bond" evidence="7">
    <location>
        <begin position="78"/>
        <end position="89"/>
    </location>
</feature>
<feature type="helix" evidence="8">
    <location>
        <begin position="2"/>
        <end position="12"/>
    </location>
</feature>
<feature type="turn" evidence="8">
    <location>
        <begin position="13"/>
        <end position="15"/>
    </location>
</feature>
<feature type="helix" evidence="8">
    <location>
        <begin position="19"/>
        <end position="22"/>
    </location>
</feature>
<feature type="strand" evidence="8">
    <location>
        <begin position="23"/>
        <end position="25"/>
    </location>
</feature>
<feature type="turn" evidence="8">
    <location>
        <begin position="26"/>
        <end position="28"/>
    </location>
</feature>
<feature type="strand" evidence="8">
    <location>
        <begin position="29"/>
        <end position="31"/>
    </location>
</feature>
<feature type="helix" evidence="8">
    <location>
        <begin position="40"/>
        <end position="57"/>
    </location>
</feature>
<feature type="turn" evidence="8">
    <location>
        <begin position="62"/>
        <end position="64"/>
    </location>
</feature>
<feature type="strand" evidence="8">
    <location>
        <begin position="69"/>
        <end position="72"/>
    </location>
</feature>
<feature type="strand" evidence="8">
    <location>
        <begin position="75"/>
        <end position="78"/>
    </location>
</feature>
<feature type="helix" evidence="8">
    <location>
        <begin position="83"/>
        <end position="101"/>
    </location>
</feature>
<feature type="helix" evidence="8">
    <location>
        <begin position="106"/>
        <end position="108"/>
    </location>
</feature>
<feature type="helix" evidence="8">
    <location>
        <begin position="113"/>
        <end position="116"/>
    </location>
</feature>
<keyword id="KW-0002">3D-structure</keyword>
<keyword id="KW-0106">Calcium</keyword>
<keyword id="KW-0903">Direct protein sequencing</keyword>
<keyword id="KW-1015">Disulfide bond</keyword>
<keyword id="KW-0378">Hydrolase</keyword>
<keyword id="KW-0442">Lipid degradation</keyword>
<keyword id="KW-0443">Lipid metabolism</keyword>
<keyword id="KW-0479">Metal-binding</keyword>
<keyword id="KW-0964">Secreted</keyword>
<accession>P04056</accession>
<proteinExistence type="evidence at protein level"/>
<organism>
    <name type="scientific">Pseudechis australis</name>
    <name type="common">Mulga snake</name>
    <name type="synonym">King brown snake</name>
    <dbReference type="NCBI Taxonomy" id="8670"/>
    <lineage>
        <taxon>Eukaryota</taxon>
        <taxon>Metazoa</taxon>
        <taxon>Chordata</taxon>
        <taxon>Craniata</taxon>
        <taxon>Vertebrata</taxon>
        <taxon>Euteleostomi</taxon>
        <taxon>Lepidosauria</taxon>
        <taxon>Squamata</taxon>
        <taxon>Bifurcata</taxon>
        <taxon>Unidentata</taxon>
        <taxon>Episquamata</taxon>
        <taxon>Toxicofera</taxon>
        <taxon>Serpentes</taxon>
        <taxon>Colubroidea</taxon>
        <taxon>Elapidae</taxon>
        <taxon>Hydrophiinae</taxon>
        <taxon>Pseudechis</taxon>
    </lineage>
</organism>
<dbReference type="EC" id="3.1.1.4"/>
<dbReference type="PIR" id="A00747">
    <property type="entry name" value="PSSNK1"/>
</dbReference>
<dbReference type="PDB" id="3V9M">
    <property type="method" value="X-ray"/>
    <property type="resolution" value="1.56 A"/>
    <property type="chains" value="A/B=1-118"/>
</dbReference>
<dbReference type="PDBsum" id="3V9M"/>
<dbReference type="SMR" id="P04056"/>
<dbReference type="BRENDA" id="3.1.1.4">
    <property type="organism ID" value="7400"/>
</dbReference>
<dbReference type="EvolutionaryTrace" id="P04056"/>
<dbReference type="GO" id="GO:0005576">
    <property type="term" value="C:extracellular region"/>
    <property type="evidence" value="ECO:0007669"/>
    <property type="project" value="UniProtKB-SubCell"/>
</dbReference>
<dbReference type="GO" id="GO:0005509">
    <property type="term" value="F:calcium ion binding"/>
    <property type="evidence" value="ECO:0007669"/>
    <property type="project" value="InterPro"/>
</dbReference>
<dbReference type="GO" id="GO:0047498">
    <property type="term" value="F:calcium-dependent phospholipase A2 activity"/>
    <property type="evidence" value="ECO:0007669"/>
    <property type="project" value="TreeGrafter"/>
</dbReference>
<dbReference type="GO" id="GO:0005543">
    <property type="term" value="F:phospholipid binding"/>
    <property type="evidence" value="ECO:0007669"/>
    <property type="project" value="TreeGrafter"/>
</dbReference>
<dbReference type="GO" id="GO:0050482">
    <property type="term" value="P:arachidonate secretion"/>
    <property type="evidence" value="ECO:0007669"/>
    <property type="project" value="InterPro"/>
</dbReference>
<dbReference type="GO" id="GO:0016042">
    <property type="term" value="P:lipid catabolic process"/>
    <property type="evidence" value="ECO:0007669"/>
    <property type="project" value="UniProtKB-KW"/>
</dbReference>
<dbReference type="GO" id="GO:0006644">
    <property type="term" value="P:phospholipid metabolic process"/>
    <property type="evidence" value="ECO:0007669"/>
    <property type="project" value="InterPro"/>
</dbReference>
<dbReference type="CDD" id="cd00125">
    <property type="entry name" value="PLA2c"/>
    <property type="match status" value="1"/>
</dbReference>
<dbReference type="FunFam" id="1.20.90.10:FF:000007">
    <property type="entry name" value="Acidic phospholipase A2"/>
    <property type="match status" value="1"/>
</dbReference>
<dbReference type="Gene3D" id="1.20.90.10">
    <property type="entry name" value="Phospholipase A2 domain"/>
    <property type="match status" value="1"/>
</dbReference>
<dbReference type="InterPro" id="IPR001211">
    <property type="entry name" value="PLipase_A2"/>
</dbReference>
<dbReference type="InterPro" id="IPR033112">
    <property type="entry name" value="PLipase_A2_Asp_AS"/>
</dbReference>
<dbReference type="InterPro" id="IPR016090">
    <property type="entry name" value="PLipase_A2_dom"/>
</dbReference>
<dbReference type="InterPro" id="IPR036444">
    <property type="entry name" value="PLipase_A2_dom_sf"/>
</dbReference>
<dbReference type="InterPro" id="IPR033113">
    <property type="entry name" value="PLipase_A2_His_AS"/>
</dbReference>
<dbReference type="PANTHER" id="PTHR11716:SF51">
    <property type="entry name" value="PHOSPHOLIPASE A2"/>
    <property type="match status" value="1"/>
</dbReference>
<dbReference type="PANTHER" id="PTHR11716">
    <property type="entry name" value="PHOSPHOLIPASE A2 FAMILY MEMBER"/>
    <property type="match status" value="1"/>
</dbReference>
<dbReference type="Pfam" id="PF00068">
    <property type="entry name" value="Phospholip_A2_1"/>
    <property type="match status" value="1"/>
</dbReference>
<dbReference type="PRINTS" id="PR00389">
    <property type="entry name" value="PHPHLIPASEA2"/>
</dbReference>
<dbReference type="SMART" id="SM00085">
    <property type="entry name" value="PA2c"/>
    <property type="match status" value="1"/>
</dbReference>
<dbReference type="SUPFAM" id="SSF48619">
    <property type="entry name" value="Phospholipase A2, PLA2"/>
    <property type="match status" value="1"/>
</dbReference>
<dbReference type="PROSITE" id="PS00119">
    <property type="entry name" value="PA2_ASP"/>
    <property type="match status" value="1"/>
</dbReference>
<dbReference type="PROSITE" id="PS00118">
    <property type="entry name" value="PA2_HIS"/>
    <property type="match status" value="1"/>
</dbReference>